<sequence length="157" mass="18091">MEALRRAHEVALRLLLCRPWASRAAARPKPSASEVLTRHLLQRRLPHWTSFCVPYSAVRNDQFGLSHFNWPVQGANYHVLRTGCFPFIKYHCSKAPWQDLARQNRFFTALKVVNLGIPTLLYGLGSWLFARVTETVHTSYGPITVYFLNKEDEGAMY</sequence>
<keyword id="KW-1267">Proteomics identification</keyword>
<keyword id="KW-1185">Reference proteome</keyword>
<keyword id="KW-0964">Secreted</keyword>
<keyword id="KW-0732">Signal</keyword>
<organism>
    <name type="scientific">Homo sapiens</name>
    <name type="common">Human</name>
    <dbReference type="NCBI Taxonomy" id="9606"/>
    <lineage>
        <taxon>Eukaryota</taxon>
        <taxon>Metazoa</taxon>
        <taxon>Chordata</taxon>
        <taxon>Craniata</taxon>
        <taxon>Vertebrata</taxon>
        <taxon>Euteleostomi</taxon>
        <taxon>Mammalia</taxon>
        <taxon>Eutheria</taxon>
        <taxon>Euarchontoglires</taxon>
        <taxon>Primates</taxon>
        <taxon>Haplorrhini</taxon>
        <taxon>Catarrhini</taxon>
        <taxon>Hominidae</taxon>
        <taxon>Homo</taxon>
    </lineage>
</organism>
<reference key="1">
    <citation type="journal article" date="2004" name="Nat. Genet.">
        <title>Complete sequencing and characterization of 21,243 full-length human cDNAs.</title>
        <authorList>
            <person name="Ota T."/>
            <person name="Suzuki Y."/>
            <person name="Nishikawa T."/>
            <person name="Otsuki T."/>
            <person name="Sugiyama T."/>
            <person name="Irie R."/>
            <person name="Wakamatsu A."/>
            <person name="Hayashi K."/>
            <person name="Sato H."/>
            <person name="Nagai K."/>
            <person name="Kimura K."/>
            <person name="Makita H."/>
            <person name="Sekine M."/>
            <person name="Obayashi M."/>
            <person name="Nishi T."/>
            <person name="Shibahara T."/>
            <person name="Tanaka T."/>
            <person name="Ishii S."/>
            <person name="Yamamoto J."/>
            <person name="Saito K."/>
            <person name="Kawai Y."/>
            <person name="Isono Y."/>
            <person name="Nakamura Y."/>
            <person name="Nagahari K."/>
            <person name="Murakami K."/>
            <person name="Yasuda T."/>
            <person name="Iwayanagi T."/>
            <person name="Wagatsuma M."/>
            <person name="Shiratori A."/>
            <person name="Sudo H."/>
            <person name="Hosoiri T."/>
            <person name="Kaku Y."/>
            <person name="Kodaira H."/>
            <person name="Kondo H."/>
            <person name="Sugawara M."/>
            <person name="Takahashi M."/>
            <person name="Kanda K."/>
            <person name="Yokoi T."/>
            <person name="Furuya T."/>
            <person name="Kikkawa E."/>
            <person name="Omura Y."/>
            <person name="Abe K."/>
            <person name="Kamihara K."/>
            <person name="Katsuta N."/>
            <person name="Sato K."/>
            <person name="Tanikawa M."/>
            <person name="Yamazaki M."/>
            <person name="Ninomiya K."/>
            <person name="Ishibashi T."/>
            <person name="Yamashita H."/>
            <person name="Murakawa K."/>
            <person name="Fujimori K."/>
            <person name="Tanai H."/>
            <person name="Kimata M."/>
            <person name="Watanabe M."/>
            <person name="Hiraoka S."/>
            <person name="Chiba Y."/>
            <person name="Ishida S."/>
            <person name="Ono Y."/>
            <person name="Takiguchi S."/>
            <person name="Watanabe S."/>
            <person name="Yosida M."/>
            <person name="Hotuta T."/>
            <person name="Kusano J."/>
            <person name="Kanehori K."/>
            <person name="Takahashi-Fujii A."/>
            <person name="Hara H."/>
            <person name="Tanase T.-O."/>
            <person name="Nomura Y."/>
            <person name="Togiya S."/>
            <person name="Komai F."/>
            <person name="Hara R."/>
            <person name="Takeuchi K."/>
            <person name="Arita M."/>
            <person name="Imose N."/>
            <person name="Musashino K."/>
            <person name="Yuuki H."/>
            <person name="Oshima A."/>
            <person name="Sasaki N."/>
            <person name="Aotsuka S."/>
            <person name="Yoshikawa Y."/>
            <person name="Matsunawa H."/>
            <person name="Ichihara T."/>
            <person name="Shiohata N."/>
            <person name="Sano S."/>
            <person name="Moriya S."/>
            <person name="Momiyama H."/>
            <person name="Satoh N."/>
            <person name="Takami S."/>
            <person name="Terashima Y."/>
            <person name="Suzuki O."/>
            <person name="Nakagawa S."/>
            <person name="Senoh A."/>
            <person name="Mizoguchi H."/>
            <person name="Goto Y."/>
            <person name="Shimizu F."/>
            <person name="Wakebe H."/>
            <person name="Hishigaki H."/>
            <person name="Watanabe T."/>
            <person name="Sugiyama A."/>
            <person name="Takemoto M."/>
            <person name="Kawakami B."/>
            <person name="Yamazaki M."/>
            <person name="Watanabe K."/>
            <person name="Kumagai A."/>
            <person name="Itakura S."/>
            <person name="Fukuzumi Y."/>
            <person name="Fujimori Y."/>
            <person name="Komiyama M."/>
            <person name="Tashiro H."/>
            <person name="Tanigami A."/>
            <person name="Fujiwara T."/>
            <person name="Ono T."/>
            <person name="Yamada K."/>
            <person name="Fujii Y."/>
            <person name="Ozaki K."/>
            <person name="Hirao M."/>
            <person name="Ohmori Y."/>
            <person name="Kawabata A."/>
            <person name="Hikiji T."/>
            <person name="Kobatake N."/>
            <person name="Inagaki H."/>
            <person name="Ikema Y."/>
            <person name="Okamoto S."/>
            <person name="Okitani R."/>
            <person name="Kawakami T."/>
            <person name="Noguchi S."/>
            <person name="Itoh T."/>
            <person name="Shigeta K."/>
            <person name="Senba T."/>
            <person name="Matsumura K."/>
            <person name="Nakajima Y."/>
            <person name="Mizuno T."/>
            <person name="Morinaga M."/>
            <person name="Sasaki M."/>
            <person name="Togashi T."/>
            <person name="Oyama M."/>
            <person name="Hata H."/>
            <person name="Watanabe M."/>
            <person name="Komatsu T."/>
            <person name="Mizushima-Sugano J."/>
            <person name="Satoh T."/>
            <person name="Shirai Y."/>
            <person name="Takahashi Y."/>
            <person name="Nakagawa K."/>
            <person name="Okumura K."/>
            <person name="Nagase T."/>
            <person name="Nomura N."/>
            <person name="Kikuchi H."/>
            <person name="Masuho Y."/>
            <person name="Yamashita R."/>
            <person name="Nakai K."/>
            <person name="Yada T."/>
            <person name="Nakamura Y."/>
            <person name="Ohara O."/>
            <person name="Isogai T."/>
            <person name="Sugano S."/>
        </authorList>
    </citation>
    <scope>NUCLEOTIDE SEQUENCE [LARGE SCALE MRNA]</scope>
    <source>
        <tissue>Cerebellum</tissue>
    </source>
</reference>
<reference key="2">
    <citation type="journal article" date="2006" name="Nature">
        <title>Analysis of the DNA sequence and duplication history of human chromosome 15.</title>
        <authorList>
            <person name="Zody M.C."/>
            <person name="Garber M."/>
            <person name="Sharpe T."/>
            <person name="Young S.K."/>
            <person name="Rowen L."/>
            <person name="O'Neill K."/>
            <person name="Whittaker C.A."/>
            <person name="Kamal M."/>
            <person name="Chang J.L."/>
            <person name="Cuomo C.A."/>
            <person name="Dewar K."/>
            <person name="FitzGerald M.G."/>
            <person name="Kodira C.D."/>
            <person name="Madan A."/>
            <person name="Qin S."/>
            <person name="Yang X."/>
            <person name="Abbasi N."/>
            <person name="Abouelleil A."/>
            <person name="Arachchi H.M."/>
            <person name="Baradarani L."/>
            <person name="Birditt B."/>
            <person name="Bloom S."/>
            <person name="Bloom T."/>
            <person name="Borowsky M.L."/>
            <person name="Burke J."/>
            <person name="Butler J."/>
            <person name="Cook A."/>
            <person name="DeArellano K."/>
            <person name="DeCaprio D."/>
            <person name="Dorris L. III"/>
            <person name="Dors M."/>
            <person name="Eichler E.E."/>
            <person name="Engels R."/>
            <person name="Fahey J."/>
            <person name="Fleetwood P."/>
            <person name="Friedman C."/>
            <person name="Gearin G."/>
            <person name="Hall J.L."/>
            <person name="Hensley G."/>
            <person name="Johnson E."/>
            <person name="Jones C."/>
            <person name="Kamat A."/>
            <person name="Kaur A."/>
            <person name="Locke D.P."/>
            <person name="Madan A."/>
            <person name="Munson G."/>
            <person name="Jaffe D.B."/>
            <person name="Lui A."/>
            <person name="Macdonald P."/>
            <person name="Mauceli E."/>
            <person name="Naylor J.W."/>
            <person name="Nesbitt R."/>
            <person name="Nicol R."/>
            <person name="O'Leary S.B."/>
            <person name="Ratcliffe A."/>
            <person name="Rounsley S."/>
            <person name="She X."/>
            <person name="Sneddon K.M.B."/>
            <person name="Stewart S."/>
            <person name="Sougnez C."/>
            <person name="Stone S.M."/>
            <person name="Topham K."/>
            <person name="Vincent D."/>
            <person name="Wang S."/>
            <person name="Zimmer A.R."/>
            <person name="Birren B.W."/>
            <person name="Hood L."/>
            <person name="Lander E.S."/>
            <person name="Nusbaum C."/>
        </authorList>
    </citation>
    <scope>NUCLEOTIDE SEQUENCE [LARGE SCALE GENOMIC DNA]</scope>
</reference>
<reference key="3">
    <citation type="submission" date="2005-07" db="EMBL/GenBank/DDBJ databases">
        <authorList>
            <person name="Mural R.J."/>
            <person name="Istrail S."/>
            <person name="Sutton G.G."/>
            <person name="Florea L."/>
            <person name="Halpern A.L."/>
            <person name="Mobarry C.M."/>
            <person name="Lippert R."/>
            <person name="Walenz B."/>
            <person name="Shatkay H."/>
            <person name="Dew I."/>
            <person name="Miller J.R."/>
            <person name="Flanigan M.J."/>
            <person name="Edwards N.J."/>
            <person name="Bolanos R."/>
            <person name="Fasulo D."/>
            <person name="Halldorsson B.V."/>
            <person name="Hannenhalli S."/>
            <person name="Turner R."/>
            <person name="Yooseph S."/>
            <person name="Lu F."/>
            <person name="Nusskern D.R."/>
            <person name="Shue B.C."/>
            <person name="Zheng X.H."/>
            <person name="Zhong F."/>
            <person name="Delcher A.L."/>
            <person name="Huson D.H."/>
            <person name="Kravitz S.A."/>
            <person name="Mouchard L."/>
            <person name="Reinert K."/>
            <person name="Remington K.A."/>
            <person name="Clark A.G."/>
            <person name="Waterman M.S."/>
            <person name="Eichler E.E."/>
            <person name="Adams M.D."/>
            <person name="Hunkapiller M.W."/>
            <person name="Myers E.W."/>
            <person name="Venter J.C."/>
        </authorList>
    </citation>
    <scope>NUCLEOTIDE SEQUENCE [LARGE SCALE GENOMIC DNA]</scope>
</reference>
<accession>A6NNL5</accession>
<accession>B4DFB2</accession>
<dbReference type="EMBL" id="AK294012">
    <property type="protein sequence ID" value="BAG57373.1"/>
    <property type="molecule type" value="mRNA"/>
</dbReference>
<dbReference type="EMBL" id="AC016355">
    <property type="status" value="NOT_ANNOTATED_CDS"/>
    <property type="molecule type" value="Genomic_DNA"/>
</dbReference>
<dbReference type="EMBL" id="CH471082">
    <property type="protein sequence ID" value="EAW77798.1"/>
    <property type="molecule type" value="Genomic_DNA"/>
</dbReference>
<dbReference type="CCDS" id="CCDS45289.1"/>
<dbReference type="RefSeq" id="NP_001137408.1">
    <property type="nucleotide sequence ID" value="NM_001143936.2"/>
</dbReference>
<dbReference type="BioGRID" id="126948">
    <property type="interactions" value="6"/>
</dbReference>
<dbReference type="FunCoup" id="A6NNL5">
    <property type="interactions" value="191"/>
</dbReference>
<dbReference type="IntAct" id="A6NNL5">
    <property type="interactions" value="4"/>
</dbReference>
<dbReference type="STRING" id="9606.ENSP00000342254"/>
<dbReference type="iPTMnet" id="A6NNL5"/>
<dbReference type="PhosphoSitePlus" id="A6NNL5"/>
<dbReference type="BioMuta" id="C15orf61"/>
<dbReference type="jPOST" id="A6NNL5"/>
<dbReference type="MassIVE" id="A6NNL5"/>
<dbReference type="PaxDb" id="9606-ENSP00000342254"/>
<dbReference type="PeptideAtlas" id="A6NNL5"/>
<dbReference type="ProteomicsDB" id="1617"/>
<dbReference type="Pumba" id="A6NNL5"/>
<dbReference type="ABCD" id="A6NNL5">
    <property type="antibodies" value="1 sequenced antibody"/>
</dbReference>
<dbReference type="Antibodypedia" id="77230">
    <property type="antibodies" value="4 antibodies from 4 providers"/>
</dbReference>
<dbReference type="DNASU" id="145853"/>
<dbReference type="Ensembl" id="ENST00000342683.6">
    <property type="protein sequence ID" value="ENSP00000342254.4"/>
    <property type="gene ID" value="ENSG00000189227.6"/>
</dbReference>
<dbReference type="GeneID" id="145853"/>
<dbReference type="KEGG" id="hsa:145853"/>
<dbReference type="MANE-Select" id="ENST00000342683.6">
    <property type="protein sequence ID" value="ENSP00000342254.4"/>
    <property type="RefSeq nucleotide sequence ID" value="NM_001143936.2"/>
    <property type="RefSeq protein sequence ID" value="NP_001137408.1"/>
</dbReference>
<dbReference type="UCSC" id="uc002aqs.4">
    <property type="organism name" value="human"/>
</dbReference>
<dbReference type="AGR" id="HGNC:34453"/>
<dbReference type="CTD" id="145853"/>
<dbReference type="GeneCards" id="C15orf61"/>
<dbReference type="HGNC" id="HGNC:34453">
    <property type="gene designation" value="C15orf61"/>
</dbReference>
<dbReference type="HPA" id="ENSG00000189227">
    <property type="expression patterns" value="Tissue enhanced (skeletal)"/>
</dbReference>
<dbReference type="neXtProt" id="NX_A6NNL5"/>
<dbReference type="OpenTargets" id="ENSG00000189227"/>
<dbReference type="PharmGKB" id="PA162378286"/>
<dbReference type="VEuPathDB" id="HostDB:ENSG00000189227"/>
<dbReference type="eggNOG" id="ENOG502S166">
    <property type="taxonomic scope" value="Eukaryota"/>
</dbReference>
<dbReference type="GeneTree" id="ENSGT00390000015942"/>
<dbReference type="HOGENOM" id="CLU_129379_0_0_1"/>
<dbReference type="InParanoid" id="A6NNL5"/>
<dbReference type="OMA" id="KYHCTRR"/>
<dbReference type="OrthoDB" id="9970237at2759"/>
<dbReference type="PAN-GO" id="A6NNL5">
    <property type="GO annotations" value="0 GO annotations based on evolutionary models"/>
</dbReference>
<dbReference type="PhylomeDB" id="A6NNL5"/>
<dbReference type="TreeFam" id="TF332748"/>
<dbReference type="PathwayCommons" id="A6NNL5"/>
<dbReference type="SignaLink" id="A6NNL5"/>
<dbReference type="BioGRID-ORCS" id="145853">
    <property type="hits" value="12 hits in 1153 CRISPR screens"/>
</dbReference>
<dbReference type="GenomeRNAi" id="145853"/>
<dbReference type="Pharos" id="A6NNL5">
    <property type="development level" value="Tdark"/>
</dbReference>
<dbReference type="PRO" id="PR:A6NNL5"/>
<dbReference type="Proteomes" id="UP000005640">
    <property type="component" value="Chromosome 15"/>
</dbReference>
<dbReference type="RNAct" id="A6NNL5">
    <property type="molecule type" value="protein"/>
</dbReference>
<dbReference type="Bgee" id="ENSG00000189227">
    <property type="expression patterns" value="Expressed in secondary oocyte and 196 other cell types or tissues"/>
</dbReference>
<dbReference type="ExpressionAtlas" id="A6NNL5">
    <property type="expression patterns" value="baseline and differential"/>
</dbReference>
<dbReference type="GO" id="GO:0005576">
    <property type="term" value="C:extracellular region"/>
    <property type="evidence" value="ECO:0007669"/>
    <property type="project" value="UniProtKB-SubCell"/>
</dbReference>
<dbReference type="GO" id="GO:0005739">
    <property type="term" value="C:mitochondrion"/>
    <property type="evidence" value="ECO:0006056"/>
    <property type="project" value="FlyBase"/>
</dbReference>
<dbReference type="InterPro" id="IPR029245">
    <property type="entry name" value="DUF4528"/>
</dbReference>
<dbReference type="PANTHER" id="PTHR34651">
    <property type="entry name" value="SIMILAR TO ENSANGP00000021391"/>
    <property type="match status" value="1"/>
</dbReference>
<dbReference type="PANTHER" id="PTHR34651:SF1">
    <property type="entry name" value="SIMILAR TO ENSANGP00000021391"/>
    <property type="match status" value="1"/>
</dbReference>
<dbReference type="Pfam" id="PF15031">
    <property type="entry name" value="DUF4528"/>
    <property type="match status" value="1"/>
</dbReference>
<gene>
    <name type="primary">C15orf61</name>
</gene>
<comment type="subcellular location">
    <subcellularLocation>
        <location evidence="2">Secreted</location>
    </subcellularLocation>
</comment>
<name>CO061_HUMAN</name>
<protein>
    <recommendedName>
        <fullName>Uncharacterized protein C15orf61</fullName>
    </recommendedName>
</protein>
<evidence type="ECO:0000255" key="1"/>
<evidence type="ECO:0000305" key="2"/>
<proteinExistence type="evidence at protein level"/>
<feature type="signal peptide" evidence="1">
    <location>
        <begin position="1"/>
        <end position="26"/>
    </location>
</feature>
<feature type="chain" id="PRO_0000332740" description="Uncharacterized protein C15orf61">
    <location>
        <begin position="27"/>
        <end position="157"/>
    </location>
</feature>